<proteinExistence type="inferred from homology"/>
<sequence>MTENNEFDVADLRREYIRGGLRRSDLTENPLELFERWLKQACEARLPDPTAMCVATVDTNGQPYQRIVLLKHYDDQGLVFYTNLGSRKAQQLAENPHISLLFPWHMLDRQVIFLGKAERLSTLEVLKYFHSRPKDSQIGAWVSQQSSRISARGVLESKFLELKQKFQQGDVPLPSFWGGFRVKFDSVEFWQGGEHRLHDRFIYQREADAWKIDRLAP</sequence>
<reference key="1">
    <citation type="journal article" date="2004" name="Proc. Natl. Acad. Sci. U.S.A.">
        <title>Insights into the evolution of Yersinia pestis through whole-genome comparison with Yersinia pseudotuberculosis.</title>
        <authorList>
            <person name="Chain P.S.G."/>
            <person name="Carniel E."/>
            <person name="Larimer F.W."/>
            <person name="Lamerdin J."/>
            <person name="Stoutland P.O."/>
            <person name="Regala W.M."/>
            <person name="Georgescu A.M."/>
            <person name="Vergez L.M."/>
            <person name="Land M.L."/>
            <person name="Motin V.L."/>
            <person name="Brubaker R.R."/>
            <person name="Fowler J."/>
            <person name="Hinnebusch J."/>
            <person name="Marceau M."/>
            <person name="Medigue C."/>
            <person name="Simonet M."/>
            <person name="Chenal-Francisque V."/>
            <person name="Souza B."/>
            <person name="Dacheux D."/>
            <person name="Elliott J.M."/>
            <person name="Derbise A."/>
            <person name="Hauser L.J."/>
            <person name="Garcia E."/>
        </authorList>
    </citation>
    <scope>NUCLEOTIDE SEQUENCE [LARGE SCALE GENOMIC DNA]</scope>
    <source>
        <strain>IP32953</strain>
    </source>
</reference>
<accession>Q66A48</accession>
<name>PDXH_YERPS</name>
<organism>
    <name type="scientific">Yersinia pseudotuberculosis serotype I (strain IP32953)</name>
    <dbReference type="NCBI Taxonomy" id="273123"/>
    <lineage>
        <taxon>Bacteria</taxon>
        <taxon>Pseudomonadati</taxon>
        <taxon>Pseudomonadota</taxon>
        <taxon>Gammaproteobacteria</taxon>
        <taxon>Enterobacterales</taxon>
        <taxon>Yersiniaceae</taxon>
        <taxon>Yersinia</taxon>
    </lineage>
</organism>
<keyword id="KW-0285">Flavoprotein</keyword>
<keyword id="KW-0288">FMN</keyword>
<keyword id="KW-0560">Oxidoreductase</keyword>
<keyword id="KW-0664">Pyridoxine biosynthesis</keyword>
<comment type="function">
    <text evidence="1">Catalyzes the oxidation of either pyridoxine 5'-phosphate (PNP) or pyridoxamine 5'-phosphate (PMP) into pyridoxal 5'-phosphate (PLP).</text>
</comment>
<comment type="catalytic activity">
    <reaction evidence="1">
        <text>pyridoxamine 5'-phosphate + O2 + H2O = pyridoxal 5'-phosphate + H2O2 + NH4(+)</text>
        <dbReference type="Rhea" id="RHEA:15817"/>
        <dbReference type="ChEBI" id="CHEBI:15377"/>
        <dbReference type="ChEBI" id="CHEBI:15379"/>
        <dbReference type="ChEBI" id="CHEBI:16240"/>
        <dbReference type="ChEBI" id="CHEBI:28938"/>
        <dbReference type="ChEBI" id="CHEBI:58451"/>
        <dbReference type="ChEBI" id="CHEBI:597326"/>
        <dbReference type="EC" id="1.4.3.5"/>
    </reaction>
</comment>
<comment type="catalytic activity">
    <reaction evidence="1">
        <text>pyridoxine 5'-phosphate + O2 = pyridoxal 5'-phosphate + H2O2</text>
        <dbReference type="Rhea" id="RHEA:15149"/>
        <dbReference type="ChEBI" id="CHEBI:15379"/>
        <dbReference type="ChEBI" id="CHEBI:16240"/>
        <dbReference type="ChEBI" id="CHEBI:58589"/>
        <dbReference type="ChEBI" id="CHEBI:597326"/>
        <dbReference type="EC" id="1.4.3.5"/>
    </reaction>
</comment>
<comment type="cofactor">
    <cofactor evidence="1">
        <name>FMN</name>
        <dbReference type="ChEBI" id="CHEBI:58210"/>
    </cofactor>
    <text evidence="1">Binds 1 FMN per subunit.</text>
</comment>
<comment type="pathway">
    <text evidence="1">Cofactor metabolism; pyridoxal 5'-phosphate salvage; pyridoxal 5'-phosphate from pyridoxamine 5'-phosphate: step 1/1.</text>
</comment>
<comment type="pathway">
    <text evidence="1">Cofactor metabolism; pyridoxal 5'-phosphate salvage; pyridoxal 5'-phosphate from pyridoxine 5'-phosphate: step 1/1.</text>
</comment>
<comment type="subunit">
    <text evidence="1">Homodimer.</text>
</comment>
<comment type="similarity">
    <text evidence="1">Belongs to the pyridoxamine 5'-phosphate oxidase family.</text>
</comment>
<evidence type="ECO:0000255" key="1">
    <source>
        <dbReference type="HAMAP-Rule" id="MF_01629"/>
    </source>
</evidence>
<protein>
    <recommendedName>
        <fullName evidence="1">Pyridoxine/pyridoxamine 5'-phosphate oxidase</fullName>
        <ecNumber evidence="1">1.4.3.5</ecNumber>
    </recommendedName>
    <alternativeName>
        <fullName evidence="1">PNP/PMP oxidase</fullName>
        <shortName evidence="1">PNPOx</shortName>
    </alternativeName>
    <alternativeName>
        <fullName evidence="1">Pyridoxal 5'-phosphate synthase</fullName>
    </alternativeName>
</protein>
<dbReference type="EC" id="1.4.3.5" evidence="1"/>
<dbReference type="EMBL" id="BX936398">
    <property type="protein sequence ID" value="CAH21522.1"/>
    <property type="molecule type" value="Genomic_DNA"/>
</dbReference>
<dbReference type="RefSeq" id="WP_002210959.1">
    <property type="nucleotide sequence ID" value="NZ_CP009712.1"/>
</dbReference>
<dbReference type="SMR" id="Q66A48"/>
<dbReference type="GeneID" id="57976305"/>
<dbReference type="KEGG" id="ypo:BZ17_176"/>
<dbReference type="KEGG" id="yps:YPTB2284"/>
<dbReference type="PATRIC" id="fig|273123.14.peg.183"/>
<dbReference type="UniPathway" id="UPA01068">
    <property type="reaction ID" value="UER00304"/>
</dbReference>
<dbReference type="UniPathway" id="UPA01068">
    <property type="reaction ID" value="UER00305"/>
</dbReference>
<dbReference type="Proteomes" id="UP000001011">
    <property type="component" value="Chromosome"/>
</dbReference>
<dbReference type="GO" id="GO:0010181">
    <property type="term" value="F:FMN binding"/>
    <property type="evidence" value="ECO:0007669"/>
    <property type="project" value="UniProtKB-UniRule"/>
</dbReference>
<dbReference type="GO" id="GO:0004733">
    <property type="term" value="F:pyridoxamine phosphate oxidase activity"/>
    <property type="evidence" value="ECO:0007669"/>
    <property type="project" value="UniProtKB-UniRule"/>
</dbReference>
<dbReference type="GO" id="GO:0008615">
    <property type="term" value="P:pyridoxine biosynthetic process"/>
    <property type="evidence" value="ECO:0007669"/>
    <property type="project" value="UniProtKB-KW"/>
</dbReference>
<dbReference type="FunFam" id="2.30.110.10:FF:000001">
    <property type="entry name" value="Pyridoxine/pyridoxamine 5'-phosphate oxidase"/>
    <property type="match status" value="1"/>
</dbReference>
<dbReference type="Gene3D" id="2.30.110.10">
    <property type="entry name" value="Electron Transport, Fmn-binding Protein, Chain A"/>
    <property type="match status" value="1"/>
</dbReference>
<dbReference type="HAMAP" id="MF_01629">
    <property type="entry name" value="PdxH"/>
    <property type="match status" value="1"/>
</dbReference>
<dbReference type="InterPro" id="IPR000659">
    <property type="entry name" value="Pyridox_Oxase"/>
</dbReference>
<dbReference type="InterPro" id="IPR019740">
    <property type="entry name" value="Pyridox_Oxase_CS"/>
</dbReference>
<dbReference type="InterPro" id="IPR011576">
    <property type="entry name" value="Pyridox_Oxase_N"/>
</dbReference>
<dbReference type="InterPro" id="IPR019576">
    <property type="entry name" value="Pyridoxamine_oxidase_dimer_C"/>
</dbReference>
<dbReference type="InterPro" id="IPR012349">
    <property type="entry name" value="Split_barrel_FMN-bd"/>
</dbReference>
<dbReference type="NCBIfam" id="TIGR00558">
    <property type="entry name" value="pdxH"/>
    <property type="match status" value="1"/>
</dbReference>
<dbReference type="NCBIfam" id="NF004231">
    <property type="entry name" value="PRK05679.1"/>
    <property type="match status" value="1"/>
</dbReference>
<dbReference type="PANTHER" id="PTHR10851:SF0">
    <property type="entry name" value="PYRIDOXINE-5'-PHOSPHATE OXIDASE"/>
    <property type="match status" value="1"/>
</dbReference>
<dbReference type="PANTHER" id="PTHR10851">
    <property type="entry name" value="PYRIDOXINE-5-PHOSPHATE OXIDASE"/>
    <property type="match status" value="1"/>
</dbReference>
<dbReference type="Pfam" id="PF10590">
    <property type="entry name" value="PNP_phzG_C"/>
    <property type="match status" value="1"/>
</dbReference>
<dbReference type="Pfam" id="PF01243">
    <property type="entry name" value="PNPOx_N"/>
    <property type="match status" value="1"/>
</dbReference>
<dbReference type="PIRSF" id="PIRSF000190">
    <property type="entry name" value="Pyd_amn-ph_oxd"/>
    <property type="match status" value="1"/>
</dbReference>
<dbReference type="SUPFAM" id="SSF50475">
    <property type="entry name" value="FMN-binding split barrel"/>
    <property type="match status" value="1"/>
</dbReference>
<dbReference type="PROSITE" id="PS01064">
    <property type="entry name" value="PYRIDOX_OXIDASE"/>
    <property type="match status" value="1"/>
</dbReference>
<gene>
    <name evidence="1" type="primary">pdxH</name>
    <name type="ordered locus">YPTB2284</name>
</gene>
<feature type="chain" id="PRO_0000167780" description="Pyridoxine/pyridoxamine 5'-phosphate oxidase">
    <location>
        <begin position="1"/>
        <end position="217"/>
    </location>
</feature>
<feature type="binding site" evidence="1">
    <location>
        <begin position="13"/>
        <end position="16"/>
    </location>
    <ligand>
        <name>substrate</name>
    </ligand>
</feature>
<feature type="binding site" evidence="1">
    <location>
        <begin position="66"/>
        <end position="71"/>
    </location>
    <ligand>
        <name>FMN</name>
        <dbReference type="ChEBI" id="CHEBI:58210"/>
    </ligand>
</feature>
<feature type="binding site" evidence="1">
    <location>
        <position position="71"/>
    </location>
    <ligand>
        <name>substrate</name>
    </ligand>
</feature>
<feature type="binding site" evidence="1">
    <location>
        <begin position="81"/>
        <end position="82"/>
    </location>
    <ligand>
        <name>FMN</name>
        <dbReference type="ChEBI" id="CHEBI:58210"/>
    </ligand>
</feature>
<feature type="binding site" evidence="1">
    <location>
        <position position="87"/>
    </location>
    <ligand>
        <name>FMN</name>
        <dbReference type="ChEBI" id="CHEBI:58210"/>
    </ligand>
</feature>
<feature type="binding site" evidence="1">
    <location>
        <position position="88"/>
    </location>
    <ligand>
        <name>FMN</name>
        <dbReference type="ChEBI" id="CHEBI:58210"/>
    </ligand>
</feature>
<feature type="binding site" evidence="1">
    <location>
        <position position="110"/>
    </location>
    <ligand>
        <name>FMN</name>
        <dbReference type="ChEBI" id="CHEBI:58210"/>
    </ligand>
</feature>
<feature type="binding site" evidence="1">
    <location>
        <position position="128"/>
    </location>
    <ligand>
        <name>substrate</name>
    </ligand>
</feature>
<feature type="binding site" evidence="1">
    <location>
        <position position="132"/>
    </location>
    <ligand>
        <name>substrate</name>
    </ligand>
</feature>
<feature type="binding site" evidence="1">
    <location>
        <position position="136"/>
    </location>
    <ligand>
        <name>substrate</name>
    </ligand>
</feature>
<feature type="binding site" evidence="1">
    <location>
        <begin position="145"/>
        <end position="146"/>
    </location>
    <ligand>
        <name>FMN</name>
        <dbReference type="ChEBI" id="CHEBI:58210"/>
    </ligand>
</feature>
<feature type="binding site" evidence="1">
    <location>
        <position position="190"/>
    </location>
    <ligand>
        <name>FMN</name>
        <dbReference type="ChEBI" id="CHEBI:58210"/>
    </ligand>
</feature>
<feature type="binding site" evidence="1">
    <location>
        <begin position="196"/>
        <end position="198"/>
    </location>
    <ligand>
        <name>substrate</name>
    </ligand>
</feature>
<feature type="binding site" evidence="1">
    <location>
        <position position="200"/>
    </location>
    <ligand>
        <name>FMN</name>
        <dbReference type="ChEBI" id="CHEBI:58210"/>
    </ligand>
</feature>